<dbReference type="EMBL" id="AF100153">
    <property type="protein sequence ID" value="AAC80558.1"/>
    <property type="molecule type" value="mRNA"/>
</dbReference>
<dbReference type="EMBL" id="BT006900">
    <property type="protein sequence ID" value="AAP35546.1"/>
    <property type="molecule type" value="mRNA"/>
</dbReference>
<dbReference type="EMBL" id="AL355877">
    <property type="status" value="NOT_ANNOTATED_CDS"/>
    <property type="molecule type" value="Genomic_DNA"/>
</dbReference>
<dbReference type="EMBL" id="AL391650">
    <property type="status" value="NOT_ANNOTATED_CDS"/>
    <property type="molecule type" value="Genomic_DNA"/>
</dbReference>
<dbReference type="EMBL" id="CH471059">
    <property type="protein sequence ID" value="EAX07842.1"/>
    <property type="molecule type" value="Genomic_DNA"/>
</dbReference>
<dbReference type="EMBL" id="BC011604">
    <property type="protein sequence ID" value="AAH11604.1"/>
    <property type="molecule type" value="mRNA"/>
</dbReference>
<dbReference type="EMBL" id="BC012797">
    <property type="protein sequence ID" value="AAH12797.1"/>
    <property type="molecule type" value="mRNA"/>
</dbReference>
<dbReference type="CCDS" id="CCDS276.1">
    <molecule id="Q969H4-2"/>
</dbReference>
<dbReference type="CCDS" id="CCDS72732.1">
    <molecule id="Q969H4-1"/>
</dbReference>
<dbReference type="RefSeq" id="NP_001284576.1">
    <molecule id="Q969H4-1"/>
    <property type="nucleotide sequence ID" value="NM_001297647.2"/>
</dbReference>
<dbReference type="RefSeq" id="NP_001284577.1">
    <property type="nucleotide sequence ID" value="NM_001297648.1"/>
</dbReference>
<dbReference type="RefSeq" id="NP_006305.2">
    <molecule id="Q969H4-2"/>
    <property type="nucleotide sequence ID" value="NM_006314.3"/>
</dbReference>
<dbReference type="PDB" id="1WWV">
    <property type="method" value="NMR"/>
    <property type="chains" value="A=1-78"/>
</dbReference>
<dbReference type="PDBsum" id="1WWV"/>
<dbReference type="SMR" id="Q969H4"/>
<dbReference type="BioGRID" id="115550">
    <property type="interactions" value="45"/>
</dbReference>
<dbReference type="CORUM" id="Q969H4"/>
<dbReference type="FunCoup" id="Q969H4">
    <property type="interactions" value="92"/>
</dbReference>
<dbReference type="IntAct" id="Q969H4">
    <property type="interactions" value="18"/>
</dbReference>
<dbReference type="MINT" id="Q969H4"/>
<dbReference type="STRING" id="9606.ENSP00000363371"/>
<dbReference type="ChEMBL" id="CHEMBL4296242"/>
<dbReference type="GlyGen" id="Q969H4">
    <property type="glycosylation" value="2 sites"/>
</dbReference>
<dbReference type="iPTMnet" id="Q969H4"/>
<dbReference type="PhosphoSitePlus" id="Q969H4"/>
<dbReference type="BioMuta" id="CNKSR1"/>
<dbReference type="DMDM" id="50400606"/>
<dbReference type="jPOST" id="Q969H4"/>
<dbReference type="MassIVE" id="Q969H4"/>
<dbReference type="PaxDb" id="9606-ENSP00000363371"/>
<dbReference type="PeptideAtlas" id="Q969H4"/>
<dbReference type="ProteomicsDB" id="75763">
    <molecule id="Q969H4-1"/>
</dbReference>
<dbReference type="ProteomicsDB" id="75764">
    <molecule id="Q969H4-2"/>
</dbReference>
<dbReference type="Antibodypedia" id="30569">
    <property type="antibodies" value="152 antibodies from 26 providers"/>
</dbReference>
<dbReference type="DNASU" id="10256"/>
<dbReference type="Ensembl" id="ENST00000361530.11">
    <molecule id="Q969H4-2"/>
    <property type="protein sequence ID" value="ENSP00000354609.6"/>
    <property type="gene ID" value="ENSG00000142675.18"/>
</dbReference>
<dbReference type="Ensembl" id="ENST00000374253.9">
    <molecule id="Q969H4-1"/>
    <property type="protein sequence ID" value="ENSP00000363371.5"/>
    <property type="gene ID" value="ENSG00000142675.18"/>
</dbReference>
<dbReference type="GeneID" id="10256"/>
<dbReference type="KEGG" id="hsa:10256"/>
<dbReference type="MANE-Select" id="ENST00000361530.11">
    <molecule id="Q969H4-2"/>
    <property type="protein sequence ID" value="ENSP00000354609.6"/>
    <property type="RefSeq nucleotide sequence ID" value="NM_006314.3"/>
    <property type="RefSeq protein sequence ID" value="NP_006305.2"/>
</dbReference>
<dbReference type="UCSC" id="uc001blm.5">
    <molecule id="Q969H4-1"/>
    <property type="organism name" value="human"/>
</dbReference>
<dbReference type="AGR" id="HGNC:19700"/>
<dbReference type="CTD" id="10256"/>
<dbReference type="DisGeNET" id="10256"/>
<dbReference type="GeneCards" id="CNKSR1"/>
<dbReference type="HGNC" id="HGNC:19700">
    <property type="gene designation" value="CNKSR1"/>
</dbReference>
<dbReference type="HPA" id="ENSG00000142675">
    <property type="expression patterns" value="Tissue enhanced (skeletal)"/>
</dbReference>
<dbReference type="MalaCards" id="CNKSR1"/>
<dbReference type="MIM" id="603272">
    <property type="type" value="gene"/>
</dbReference>
<dbReference type="neXtProt" id="NX_Q969H4"/>
<dbReference type="OpenTargets" id="ENSG00000142675"/>
<dbReference type="PharmGKB" id="PA134901167"/>
<dbReference type="VEuPathDB" id="HostDB:ENSG00000142675"/>
<dbReference type="eggNOG" id="KOG1738">
    <property type="taxonomic scope" value="Eukaryota"/>
</dbReference>
<dbReference type="GeneTree" id="ENSGT00940000159599"/>
<dbReference type="HOGENOM" id="CLU_013414_1_0_1"/>
<dbReference type="InParanoid" id="Q969H4"/>
<dbReference type="OMA" id="VFQLTHN"/>
<dbReference type="OrthoDB" id="9480791at2759"/>
<dbReference type="PAN-GO" id="Q969H4">
    <property type="GO annotations" value="0 GO annotations based on evolutionary models"/>
</dbReference>
<dbReference type="PhylomeDB" id="Q969H4"/>
<dbReference type="TreeFam" id="TF326495"/>
<dbReference type="PathwayCommons" id="Q969H4"/>
<dbReference type="Reactome" id="R-HSA-5674135">
    <property type="pathway name" value="MAP2K and MAPK activation"/>
</dbReference>
<dbReference type="Reactome" id="R-HSA-6802946">
    <property type="pathway name" value="Signaling by moderate kinase activity BRAF mutants"/>
</dbReference>
<dbReference type="Reactome" id="R-HSA-6802948">
    <property type="pathway name" value="Signaling by high-kinase activity BRAF mutants"/>
</dbReference>
<dbReference type="Reactome" id="R-HSA-6802952">
    <property type="pathway name" value="Signaling by BRAF and RAF1 fusions"/>
</dbReference>
<dbReference type="Reactome" id="R-HSA-6802955">
    <property type="pathway name" value="Paradoxical activation of RAF signaling by kinase inactive BRAF"/>
</dbReference>
<dbReference type="Reactome" id="R-HSA-9649948">
    <property type="pathway name" value="Signaling downstream of RAS mutants"/>
</dbReference>
<dbReference type="Reactome" id="R-HSA-9656223">
    <property type="pathway name" value="Signaling by RAF1 mutants"/>
</dbReference>
<dbReference type="SignaLink" id="Q969H4"/>
<dbReference type="SIGNOR" id="Q969H4"/>
<dbReference type="BioGRID-ORCS" id="10256">
    <property type="hits" value="12 hits in 1145 CRISPR screens"/>
</dbReference>
<dbReference type="ChiTaRS" id="CNKSR1">
    <property type="organism name" value="human"/>
</dbReference>
<dbReference type="EvolutionaryTrace" id="Q969H4"/>
<dbReference type="GeneWiki" id="CNKSR1"/>
<dbReference type="GenomeRNAi" id="10256"/>
<dbReference type="Pharos" id="Q969H4">
    <property type="development level" value="Tchem"/>
</dbReference>
<dbReference type="PRO" id="PR:Q969H4"/>
<dbReference type="Proteomes" id="UP000005640">
    <property type="component" value="Chromosome 1"/>
</dbReference>
<dbReference type="RNAct" id="Q969H4">
    <property type="molecule type" value="protein"/>
</dbReference>
<dbReference type="Bgee" id="ENSG00000142675">
    <property type="expression patterns" value="Expressed in hindlimb stylopod muscle and 175 other cell types or tissues"/>
</dbReference>
<dbReference type="ExpressionAtlas" id="Q969H4">
    <property type="expression patterns" value="baseline and differential"/>
</dbReference>
<dbReference type="GO" id="GO:0005938">
    <property type="term" value="C:cell cortex"/>
    <property type="evidence" value="ECO:0000314"/>
    <property type="project" value="MGI"/>
</dbReference>
<dbReference type="GO" id="GO:0005911">
    <property type="term" value="C:cell-cell junction"/>
    <property type="evidence" value="ECO:0000304"/>
    <property type="project" value="ProtInc"/>
</dbReference>
<dbReference type="GO" id="GO:0005886">
    <property type="term" value="C:plasma membrane"/>
    <property type="evidence" value="ECO:0000304"/>
    <property type="project" value="ProtInc"/>
</dbReference>
<dbReference type="GO" id="GO:0030674">
    <property type="term" value="F:protein-macromolecule adaptor activity"/>
    <property type="evidence" value="ECO:0000314"/>
    <property type="project" value="MGI"/>
</dbReference>
<dbReference type="GO" id="GO:0007169">
    <property type="term" value="P:cell surface receptor protein tyrosine kinase signaling pathway"/>
    <property type="evidence" value="ECO:0000304"/>
    <property type="project" value="ProtInc"/>
</dbReference>
<dbReference type="CDD" id="cd06748">
    <property type="entry name" value="PDZ_CNK1_2_3-like"/>
    <property type="match status" value="1"/>
</dbReference>
<dbReference type="CDD" id="cd01260">
    <property type="entry name" value="PH_CNK_mammalian-like"/>
    <property type="match status" value="1"/>
</dbReference>
<dbReference type="CDD" id="cd09511">
    <property type="entry name" value="SAM_CNK1_2_3-suppressor"/>
    <property type="match status" value="1"/>
</dbReference>
<dbReference type="FunFam" id="2.30.29.30:FF:000282">
    <property type="entry name" value="Connector enhancer of kinase suppressor of Ras 1 variant"/>
    <property type="match status" value="1"/>
</dbReference>
<dbReference type="Gene3D" id="2.30.42.10">
    <property type="match status" value="1"/>
</dbReference>
<dbReference type="Gene3D" id="2.30.29.30">
    <property type="entry name" value="Pleckstrin-homology domain (PH domain)/Phosphotyrosine-binding domain (PTB)"/>
    <property type="match status" value="1"/>
</dbReference>
<dbReference type="Gene3D" id="1.10.150.50">
    <property type="entry name" value="Transcription Factor, Ets-1"/>
    <property type="match status" value="1"/>
</dbReference>
<dbReference type="InterPro" id="IPR049628">
    <property type="entry name" value="CNK1-3_SAM"/>
</dbReference>
<dbReference type="InterPro" id="IPR051566">
    <property type="entry name" value="CNKSR"/>
</dbReference>
<dbReference type="InterPro" id="IPR017874">
    <property type="entry name" value="CRIC_domain"/>
</dbReference>
<dbReference type="InterPro" id="IPR001478">
    <property type="entry name" value="PDZ"/>
</dbReference>
<dbReference type="InterPro" id="IPR036034">
    <property type="entry name" value="PDZ_sf"/>
</dbReference>
<dbReference type="InterPro" id="IPR011993">
    <property type="entry name" value="PH-like_dom_sf"/>
</dbReference>
<dbReference type="InterPro" id="IPR001849">
    <property type="entry name" value="PH_domain"/>
</dbReference>
<dbReference type="InterPro" id="IPR001660">
    <property type="entry name" value="SAM"/>
</dbReference>
<dbReference type="InterPro" id="IPR013761">
    <property type="entry name" value="SAM/pointed_sf"/>
</dbReference>
<dbReference type="PANTHER" id="PTHR12844">
    <property type="entry name" value="CONNECTOR ENCHANCER OF KINASE SUPPRESSOR OF RAS"/>
    <property type="match status" value="1"/>
</dbReference>
<dbReference type="PANTHER" id="PTHR12844:SF10">
    <property type="entry name" value="CONNECTOR ENHANCER OF KINASE SUPPRESSOR OF RAS 1"/>
    <property type="match status" value="1"/>
</dbReference>
<dbReference type="Pfam" id="PF10534">
    <property type="entry name" value="CRIC_ras_sig"/>
    <property type="match status" value="1"/>
</dbReference>
<dbReference type="Pfam" id="PF00169">
    <property type="entry name" value="PH"/>
    <property type="match status" value="1"/>
</dbReference>
<dbReference type="SMART" id="SM00233">
    <property type="entry name" value="PH"/>
    <property type="match status" value="1"/>
</dbReference>
<dbReference type="SMART" id="SM00454">
    <property type="entry name" value="SAM"/>
    <property type="match status" value="1"/>
</dbReference>
<dbReference type="SUPFAM" id="SSF50729">
    <property type="entry name" value="PH domain-like"/>
    <property type="match status" value="1"/>
</dbReference>
<dbReference type="SUPFAM" id="SSF47769">
    <property type="entry name" value="SAM/Pointed domain"/>
    <property type="match status" value="1"/>
</dbReference>
<dbReference type="PROSITE" id="PS51290">
    <property type="entry name" value="CRIC"/>
    <property type="match status" value="1"/>
</dbReference>
<dbReference type="PROSITE" id="PS50106">
    <property type="entry name" value="PDZ"/>
    <property type="match status" value="1"/>
</dbReference>
<dbReference type="PROSITE" id="PS50003">
    <property type="entry name" value="PH_DOMAIN"/>
    <property type="match status" value="1"/>
</dbReference>
<dbReference type="PROSITE" id="PS50105">
    <property type="entry name" value="SAM_DOMAIN"/>
    <property type="match status" value="1"/>
</dbReference>
<protein>
    <recommendedName>
        <fullName>Connector enhancer of kinase suppressor of ras 1</fullName>
        <shortName>Connector enhancer of KSR 1</shortName>
    </recommendedName>
    <alternativeName>
        <fullName>CNK homolog protein 1</fullName>
        <shortName>CNK1</shortName>
        <shortName>hCNK1</shortName>
    </alternativeName>
    <alternativeName>
        <fullName>Connector enhancer of KSR-like</fullName>
    </alternativeName>
</protein>
<organism>
    <name type="scientific">Homo sapiens</name>
    <name type="common">Human</name>
    <dbReference type="NCBI Taxonomy" id="9606"/>
    <lineage>
        <taxon>Eukaryota</taxon>
        <taxon>Metazoa</taxon>
        <taxon>Chordata</taxon>
        <taxon>Craniata</taxon>
        <taxon>Vertebrata</taxon>
        <taxon>Euteleostomi</taxon>
        <taxon>Mammalia</taxon>
        <taxon>Eutheria</taxon>
        <taxon>Euarchontoglires</taxon>
        <taxon>Primates</taxon>
        <taxon>Haplorrhini</taxon>
        <taxon>Catarrhini</taxon>
        <taxon>Hominidae</taxon>
        <taxon>Homo</taxon>
    </lineage>
</organism>
<keyword id="KW-0002">3D-structure</keyword>
<keyword id="KW-0025">Alternative splicing</keyword>
<keyword id="KW-0175">Coiled coil</keyword>
<keyword id="KW-0963">Cytoplasm</keyword>
<keyword id="KW-0472">Membrane</keyword>
<keyword id="KW-0597">Phosphoprotein</keyword>
<keyword id="KW-1267">Proteomics identification</keyword>
<keyword id="KW-1185">Reference proteome</keyword>
<accession>Q969H4</accession>
<accession>B1AMW9</accession>
<accession>O95381</accession>
<reference key="1">
    <citation type="journal article" date="1998" name="Cell">
        <title>CNK, a RAF-binding multidomain protein required for RAS signaling.</title>
        <authorList>
            <person name="Therrien M."/>
            <person name="Wong A.M."/>
            <person name="Rubin G.M."/>
        </authorList>
    </citation>
    <scope>NUCLEOTIDE SEQUENCE [MRNA] (ISOFORM 2)</scope>
    <source>
        <tissue>Neuroepithelium</tissue>
    </source>
</reference>
<reference key="2">
    <citation type="submission" date="2003-05" db="EMBL/GenBank/DDBJ databases">
        <title>Cloning of human full-length CDSs in BD Creator(TM) system donor vector.</title>
        <authorList>
            <person name="Kalnine N."/>
            <person name="Chen X."/>
            <person name="Rolfs A."/>
            <person name="Halleck A."/>
            <person name="Hines L."/>
            <person name="Eisenstein S."/>
            <person name="Koundinya M."/>
            <person name="Raphael J."/>
            <person name="Moreira D."/>
            <person name="Kelley T."/>
            <person name="LaBaer J."/>
            <person name="Lin Y."/>
            <person name="Phelan M."/>
            <person name="Farmer A."/>
        </authorList>
    </citation>
    <scope>NUCLEOTIDE SEQUENCE [LARGE SCALE MRNA] (ISOFORM 1)</scope>
</reference>
<reference key="3">
    <citation type="journal article" date="2006" name="Nature">
        <title>The DNA sequence and biological annotation of human chromosome 1.</title>
        <authorList>
            <person name="Gregory S.G."/>
            <person name="Barlow K.F."/>
            <person name="McLay K.E."/>
            <person name="Kaul R."/>
            <person name="Swarbreck D."/>
            <person name="Dunham A."/>
            <person name="Scott C.E."/>
            <person name="Howe K.L."/>
            <person name="Woodfine K."/>
            <person name="Spencer C.C.A."/>
            <person name="Jones M.C."/>
            <person name="Gillson C."/>
            <person name="Searle S."/>
            <person name="Zhou Y."/>
            <person name="Kokocinski F."/>
            <person name="McDonald L."/>
            <person name="Evans R."/>
            <person name="Phillips K."/>
            <person name="Atkinson A."/>
            <person name="Cooper R."/>
            <person name="Jones C."/>
            <person name="Hall R.E."/>
            <person name="Andrews T.D."/>
            <person name="Lloyd C."/>
            <person name="Ainscough R."/>
            <person name="Almeida J.P."/>
            <person name="Ambrose K.D."/>
            <person name="Anderson F."/>
            <person name="Andrew R.W."/>
            <person name="Ashwell R.I.S."/>
            <person name="Aubin K."/>
            <person name="Babbage A.K."/>
            <person name="Bagguley C.L."/>
            <person name="Bailey J."/>
            <person name="Beasley H."/>
            <person name="Bethel G."/>
            <person name="Bird C.P."/>
            <person name="Bray-Allen S."/>
            <person name="Brown J.Y."/>
            <person name="Brown A.J."/>
            <person name="Buckley D."/>
            <person name="Burton J."/>
            <person name="Bye J."/>
            <person name="Carder C."/>
            <person name="Chapman J.C."/>
            <person name="Clark S.Y."/>
            <person name="Clarke G."/>
            <person name="Clee C."/>
            <person name="Cobley V."/>
            <person name="Collier R.E."/>
            <person name="Corby N."/>
            <person name="Coville G.J."/>
            <person name="Davies J."/>
            <person name="Deadman R."/>
            <person name="Dunn M."/>
            <person name="Earthrowl M."/>
            <person name="Ellington A.G."/>
            <person name="Errington H."/>
            <person name="Frankish A."/>
            <person name="Frankland J."/>
            <person name="French L."/>
            <person name="Garner P."/>
            <person name="Garnett J."/>
            <person name="Gay L."/>
            <person name="Ghori M.R.J."/>
            <person name="Gibson R."/>
            <person name="Gilby L.M."/>
            <person name="Gillett W."/>
            <person name="Glithero R.J."/>
            <person name="Grafham D.V."/>
            <person name="Griffiths C."/>
            <person name="Griffiths-Jones S."/>
            <person name="Grocock R."/>
            <person name="Hammond S."/>
            <person name="Harrison E.S.I."/>
            <person name="Hart E."/>
            <person name="Haugen E."/>
            <person name="Heath P.D."/>
            <person name="Holmes S."/>
            <person name="Holt K."/>
            <person name="Howden P.J."/>
            <person name="Hunt A.R."/>
            <person name="Hunt S.E."/>
            <person name="Hunter G."/>
            <person name="Isherwood J."/>
            <person name="James R."/>
            <person name="Johnson C."/>
            <person name="Johnson D."/>
            <person name="Joy A."/>
            <person name="Kay M."/>
            <person name="Kershaw J.K."/>
            <person name="Kibukawa M."/>
            <person name="Kimberley A.M."/>
            <person name="King A."/>
            <person name="Knights A.J."/>
            <person name="Lad H."/>
            <person name="Laird G."/>
            <person name="Lawlor S."/>
            <person name="Leongamornlert D.A."/>
            <person name="Lloyd D.M."/>
            <person name="Loveland J."/>
            <person name="Lovell J."/>
            <person name="Lush M.J."/>
            <person name="Lyne R."/>
            <person name="Martin S."/>
            <person name="Mashreghi-Mohammadi M."/>
            <person name="Matthews L."/>
            <person name="Matthews N.S.W."/>
            <person name="McLaren S."/>
            <person name="Milne S."/>
            <person name="Mistry S."/>
            <person name="Moore M.J.F."/>
            <person name="Nickerson T."/>
            <person name="O'Dell C.N."/>
            <person name="Oliver K."/>
            <person name="Palmeiri A."/>
            <person name="Palmer S.A."/>
            <person name="Parker A."/>
            <person name="Patel D."/>
            <person name="Pearce A.V."/>
            <person name="Peck A.I."/>
            <person name="Pelan S."/>
            <person name="Phelps K."/>
            <person name="Phillimore B.J."/>
            <person name="Plumb R."/>
            <person name="Rajan J."/>
            <person name="Raymond C."/>
            <person name="Rouse G."/>
            <person name="Saenphimmachak C."/>
            <person name="Sehra H.K."/>
            <person name="Sheridan E."/>
            <person name="Shownkeen R."/>
            <person name="Sims S."/>
            <person name="Skuce C.D."/>
            <person name="Smith M."/>
            <person name="Steward C."/>
            <person name="Subramanian S."/>
            <person name="Sycamore N."/>
            <person name="Tracey A."/>
            <person name="Tromans A."/>
            <person name="Van Helmond Z."/>
            <person name="Wall M."/>
            <person name="Wallis J.M."/>
            <person name="White S."/>
            <person name="Whitehead S.L."/>
            <person name="Wilkinson J.E."/>
            <person name="Willey D.L."/>
            <person name="Williams H."/>
            <person name="Wilming L."/>
            <person name="Wray P.W."/>
            <person name="Wu Z."/>
            <person name="Coulson A."/>
            <person name="Vaudin M."/>
            <person name="Sulston J.E."/>
            <person name="Durbin R.M."/>
            <person name="Hubbard T."/>
            <person name="Wooster R."/>
            <person name="Dunham I."/>
            <person name="Carter N.P."/>
            <person name="McVean G."/>
            <person name="Ross M.T."/>
            <person name="Harrow J."/>
            <person name="Olson M.V."/>
            <person name="Beck S."/>
            <person name="Rogers J."/>
            <person name="Bentley D.R."/>
        </authorList>
    </citation>
    <scope>NUCLEOTIDE SEQUENCE [LARGE SCALE GENOMIC DNA]</scope>
</reference>
<reference key="4">
    <citation type="submission" date="2005-09" db="EMBL/GenBank/DDBJ databases">
        <authorList>
            <person name="Mural R.J."/>
            <person name="Istrail S."/>
            <person name="Sutton G.G."/>
            <person name="Florea L."/>
            <person name="Halpern A.L."/>
            <person name="Mobarry C.M."/>
            <person name="Lippert R."/>
            <person name="Walenz B."/>
            <person name="Shatkay H."/>
            <person name="Dew I."/>
            <person name="Miller J.R."/>
            <person name="Flanigan M.J."/>
            <person name="Edwards N.J."/>
            <person name="Bolanos R."/>
            <person name="Fasulo D."/>
            <person name="Halldorsson B.V."/>
            <person name="Hannenhalli S."/>
            <person name="Turner R."/>
            <person name="Yooseph S."/>
            <person name="Lu F."/>
            <person name="Nusskern D.R."/>
            <person name="Shue B.C."/>
            <person name="Zheng X.H."/>
            <person name="Zhong F."/>
            <person name="Delcher A.L."/>
            <person name="Huson D.H."/>
            <person name="Kravitz S.A."/>
            <person name="Mouchard L."/>
            <person name="Reinert K."/>
            <person name="Remington K.A."/>
            <person name="Clark A.G."/>
            <person name="Waterman M.S."/>
            <person name="Eichler E.E."/>
            <person name="Adams M.D."/>
            <person name="Hunkapiller M.W."/>
            <person name="Myers E.W."/>
            <person name="Venter J.C."/>
        </authorList>
    </citation>
    <scope>NUCLEOTIDE SEQUENCE [LARGE SCALE GENOMIC DNA]</scope>
</reference>
<reference key="5">
    <citation type="journal article" date="2004" name="Genome Res.">
        <title>The status, quality, and expansion of the NIH full-length cDNA project: the Mammalian Gene Collection (MGC).</title>
        <authorList>
            <consortium name="The MGC Project Team"/>
        </authorList>
    </citation>
    <scope>NUCLEOTIDE SEQUENCE [LARGE SCALE MRNA] (ISOFORM 1)</scope>
    <source>
        <tissue>Placenta</tissue>
    </source>
</reference>
<reference key="6">
    <citation type="journal article" date="2004" name="Mol. Cell. Biol.">
        <title>Human CNK1 acts as a scaffold protein, linking Rho and Ras signal transduction pathways.</title>
        <authorList>
            <person name="Jaffe A.B."/>
            <person name="Aspenstroem P."/>
            <person name="Hall A."/>
        </authorList>
    </citation>
    <scope>INTERACTION WITH RHO AND RALGDS</scope>
    <scope>MUTAGENESIS OF TRP-493</scope>
</reference>
<reference key="7">
    <citation type="journal article" date="2008" name="Proc. Natl. Acad. Sci. U.S.A.">
        <title>A quantitative atlas of mitotic phosphorylation.</title>
        <authorList>
            <person name="Dephoure N."/>
            <person name="Zhou C."/>
            <person name="Villen J."/>
            <person name="Beausoleil S.A."/>
            <person name="Bakalarski C.E."/>
            <person name="Elledge S.J."/>
            <person name="Gygi S.P."/>
        </authorList>
    </citation>
    <scope>PHOSPHORYLATION [LARGE SCALE ANALYSIS] AT SER-314</scope>
    <scope>IDENTIFICATION BY MASS SPECTROMETRY [LARGE SCALE ANALYSIS]</scope>
    <source>
        <tissue>Cervix carcinoma</tissue>
    </source>
</reference>
<reference key="8">
    <citation type="journal article" date="2011" name="Sci. Signal.">
        <title>System-wide temporal characterization of the proteome and phosphoproteome of human embryonic stem cell differentiation.</title>
        <authorList>
            <person name="Rigbolt K.T."/>
            <person name="Prokhorova T.A."/>
            <person name="Akimov V."/>
            <person name="Henningsen J."/>
            <person name="Johansen P.T."/>
            <person name="Kratchmarova I."/>
            <person name="Kassem M."/>
            <person name="Mann M."/>
            <person name="Olsen J.V."/>
            <person name="Blagoev B."/>
        </authorList>
    </citation>
    <scope>PHOSPHORYLATION [LARGE SCALE ANALYSIS] AT SER-314</scope>
    <scope>IDENTIFICATION BY MASS SPECTROMETRY [LARGE SCALE ANALYSIS]</scope>
</reference>
<reference key="9">
    <citation type="journal article" date="2013" name="J. Proteome Res.">
        <title>Toward a comprehensive characterization of a human cancer cell phosphoproteome.</title>
        <authorList>
            <person name="Zhou H."/>
            <person name="Di Palma S."/>
            <person name="Preisinger C."/>
            <person name="Peng M."/>
            <person name="Polat A.N."/>
            <person name="Heck A.J."/>
            <person name="Mohammed S."/>
        </authorList>
    </citation>
    <scope>PHOSPHORYLATION [LARGE SCALE ANALYSIS] AT SER-307 AND SER-314</scope>
    <scope>IDENTIFICATION BY MASS SPECTROMETRY [LARGE SCALE ANALYSIS]</scope>
    <source>
        <tissue>Cervix carcinoma</tissue>
    </source>
</reference>
<reference key="10">
    <citation type="submission" date="2005-07" db="PDB data bank">
        <title>Solution structure of the SAM domain of human connector enhancer of KSR-like protein CNK1.</title>
        <authorList>
            <consortium name="RIKEN structural genomics initiative (RSGI)"/>
        </authorList>
    </citation>
    <scope>STRUCTURE BY NMR OF 1-78</scope>
</reference>
<sequence length="720" mass="79706">MEPVETWTPGKVATWLRGLDDSLQDYPFEDWQLPGKNLLQLCPQSLEALAVRSLGHQELILGGVEQLQALSSRLQTENLQSLTEGLLGATHDFQSIVQGCLGDCAKTPIDVLCAAVELLHEADALLFWLSRYLFSHLNDFSACQEIRDLLEELSQVLHEDGPAAEKEGTVLRICSHVAGICHNILVCCPKELLEQKAVLEQVQLDSPLGLEIHTTSNCQHFVSQVDTQVPTDSRLQIQPGDEVVQINEQVVVREERDMVGWPRKNMVRELLREPAGLSLVLKKIPIPETPPQTPPQVLDSPHQRSPSLSLAPLSPRAPSEDVFAFDLSSNPSPGPSPAWTDSASLGPEPLPIPPEPPAILPAGVAGTPGLPESPDKSPVGRKKSKGLATRLSRRRVSCRELGRPDCDGWLLLRKAPGGFMGPRWRRRWFVLKGHTLYWYRQPQDEKAEGLINVSNYSLESGHDQKKKYVFQLTHDVYKPFIFAADTLTDLSMWVRHLITCISKYQSPGRAPPPREEDCYSETEAEDPDDEAGSHSASPSPAQAGSPLHGDTSPAATPTQRSPRTSFGSLTDSSEEALEGMVRGLRQGGVSLLGQPQPLTQEQWRSSFMRRNRDPQLNERVHRVRALQSTLKAKLQELQVLEEVLGDPELTGEKFRQWKEQNRELYSEGLGAWGVAQAEGSSHILTSDSTEQSPHSLPSDPEEHSHLCPLTSESSLRPPDL</sequence>
<comment type="function">
    <text>May function as an adapter protein or regulator of Ras signaling pathways.</text>
</comment>
<comment type="subunit">
    <text evidence="8">Interacts with RHO and RALGDS.</text>
</comment>
<comment type="interaction">
    <interactant intactId="EBI-741671">
        <id>Q969H4</id>
    </interactant>
    <interactant intactId="EBI-997830">
        <id>Q15438</id>
        <label>CYTH1</label>
    </interactant>
    <organismsDiffer>false</organismsDiffer>
    <experiments>6</experiments>
</comment>
<comment type="interaction">
    <interactant intactId="EBI-741671">
        <id>Q969H4</id>
    </interactant>
    <interactant intactId="EBI-448974">
        <id>Q99418</id>
        <label>CYTH2</label>
    </interactant>
    <organismsDiffer>false</organismsDiffer>
    <experiments>4</experiments>
</comment>
<comment type="interaction">
    <interactant intactId="EBI-741671">
        <id>Q969H4</id>
    </interactant>
    <interactant intactId="EBI-741648">
        <id>O43739</id>
        <label>CYTH3</label>
    </interactant>
    <organismsDiffer>false</organismsDiffer>
    <experiments>5</experiments>
</comment>
<comment type="interaction">
    <interactant intactId="EBI-741671">
        <id>Q969H4</id>
    </interactant>
    <interactant intactId="EBI-11974015">
        <id>O43739-2</id>
        <label>CYTH3</label>
    </interactant>
    <organismsDiffer>false</organismsDiffer>
    <experiments>4</experiments>
</comment>
<comment type="interaction">
    <interactant intactId="EBI-741671">
        <id>Q969H4</id>
    </interactant>
    <interactant intactId="EBI-10277443">
        <id>Q8WWE8</id>
        <label>CYTH4</label>
    </interactant>
    <organismsDiffer>false</organismsDiffer>
    <experiments>3</experiments>
</comment>
<comment type="interaction">
    <interactant intactId="EBI-741671">
        <id>Q969H4</id>
    </interactant>
    <interactant intactId="EBI-11521003">
        <id>Q9UIA0</id>
        <label>CYTH4</label>
    </interactant>
    <organismsDiffer>false</organismsDiffer>
    <experiments>4</experiments>
</comment>
<comment type="interaction">
    <interactant intactId="EBI-741671">
        <id>Q969H4</id>
    </interactant>
    <interactant intactId="EBI-714158">
        <id>Q13526</id>
        <label>PIN1</label>
    </interactant>
    <organismsDiffer>false</organismsDiffer>
    <experiments>6</experiments>
</comment>
<comment type="interaction">
    <interactant intactId="EBI-741671">
        <id>Q969H4</id>
    </interactant>
    <interactant intactId="EBI-11974855">
        <id>Q9Y4C2-2</id>
        <label>TCAF1</label>
    </interactant>
    <organismsDiffer>false</organismsDiffer>
    <experiments>3</experiments>
</comment>
<comment type="interaction">
    <interactant intactId="EBI-741671">
        <id>Q969H4</id>
    </interactant>
    <interactant intactId="EBI-10183064">
        <id>Q8N5A5-2</id>
        <label>ZGPAT</label>
    </interactant>
    <organismsDiffer>false</organismsDiffer>
    <experiments>3</experiments>
</comment>
<comment type="subcellular location">
    <subcellularLocation>
        <location evidence="1">Cytoplasm</location>
    </subcellularLocation>
    <subcellularLocation>
        <location evidence="1">Membrane</location>
        <topology evidence="1">Peripheral membrane protein</topology>
    </subcellularLocation>
</comment>
<comment type="alternative products">
    <event type="alternative splicing"/>
    <isoform>
        <id>Q969H4-1</id>
        <name>1</name>
        <sequence type="displayed"/>
    </isoform>
    <isoform>
        <id>Q969H4-2</id>
        <name>2</name>
        <sequence type="described" ref="VSP_010886"/>
    </isoform>
</comment>
<comment type="PTM">
    <text>Phosphorylated on tyrosine.</text>
</comment>
<comment type="similarity">
    <text evidence="10">Belongs to the CNKSR family.</text>
</comment>
<evidence type="ECO:0000250" key="1"/>
<evidence type="ECO:0000255" key="2"/>
<evidence type="ECO:0000255" key="3">
    <source>
        <dbReference type="PROSITE-ProRule" id="PRU00143"/>
    </source>
</evidence>
<evidence type="ECO:0000255" key="4">
    <source>
        <dbReference type="PROSITE-ProRule" id="PRU00145"/>
    </source>
</evidence>
<evidence type="ECO:0000255" key="5">
    <source>
        <dbReference type="PROSITE-ProRule" id="PRU00184"/>
    </source>
</evidence>
<evidence type="ECO:0000255" key="6">
    <source>
        <dbReference type="PROSITE-ProRule" id="PRU00621"/>
    </source>
</evidence>
<evidence type="ECO:0000256" key="7">
    <source>
        <dbReference type="SAM" id="MobiDB-lite"/>
    </source>
</evidence>
<evidence type="ECO:0000269" key="8">
    <source>
    </source>
</evidence>
<evidence type="ECO:0000303" key="9">
    <source>
    </source>
</evidence>
<evidence type="ECO:0000305" key="10"/>
<evidence type="ECO:0007744" key="11">
    <source>
    </source>
</evidence>
<evidence type="ECO:0007744" key="12">
    <source>
    </source>
</evidence>
<evidence type="ECO:0007744" key="13">
    <source>
    </source>
</evidence>
<evidence type="ECO:0007829" key="14">
    <source>
        <dbReference type="PDB" id="1WWV"/>
    </source>
</evidence>
<name>CNKR1_HUMAN</name>
<proteinExistence type="evidence at protein level"/>
<feature type="chain" id="PRO_0000089969" description="Connector enhancer of kinase suppressor of ras 1">
    <location>
        <begin position="1"/>
        <end position="720"/>
    </location>
</feature>
<feature type="domain" description="SAM" evidence="5">
    <location>
        <begin position="7"/>
        <end position="70"/>
    </location>
</feature>
<feature type="domain" description="CRIC" evidence="6">
    <location>
        <begin position="78"/>
        <end position="164"/>
    </location>
</feature>
<feature type="domain" description="PDZ" evidence="3">
    <location>
        <begin position="196"/>
        <end position="285"/>
    </location>
</feature>
<feature type="domain" description="PH" evidence="4">
    <location>
        <begin position="403"/>
        <end position="502"/>
    </location>
</feature>
<feature type="region of interest" description="Disordered" evidence="7">
    <location>
        <begin position="285"/>
        <end position="390"/>
    </location>
</feature>
<feature type="region of interest" description="Disordered" evidence="7">
    <location>
        <begin position="504"/>
        <end position="573"/>
    </location>
</feature>
<feature type="region of interest" description="Disordered" evidence="7">
    <location>
        <begin position="676"/>
        <end position="720"/>
    </location>
</feature>
<feature type="coiled-coil region" evidence="2">
    <location>
        <begin position="615"/>
        <end position="646"/>
    </location>
</feature>
<feature type="compositionally biased region" description="Low complexity" evidence="7">
    <location>
        <begin position="304"/>
        <end position="317"/>
    </location>
</feature>
<feature type="compositionally biased region" description="Pro residues" evidence="7">
    <location>
        <begin position="348"/>
        <end position="359"/>
    </location>
</feature>
<feature type="compositionally biased region" description="Basic residues" evidence="7">
    <location>
        <begin position="379"/>
        <end position="390"/>
    </location>
</feature>
<feature type="compositionally biased region" description="Acidic residues" evidence="7">
    <location>
        <begin position="518"/>
        <end position="530"/>
    </location>
</feature>
<feature type="compositionally biased region" description="Low complexity" evidence="7">
    <location>
        <begin position="533"/>
        <end position="546"/>
    </location>
</feature>
<feature type="compositionally biased region" description="Polar residues" evidence="7">
    <location>
        <begin position="553"/>
        <end position="571"/>
    </location>
</feature>
<feature type="compositionally biased region" description="Polar residues" evidence="7">
    <location>
        <begin position="678"/>
        <end position="695"/>
    </location>
</feature>
<feature type="modified residue" description="Phosphoserine" evidence="13">
    <location>
        <position position="307"/>
    </location>
</feature>
<feature type="modified residue" description="Phosphoserine" evidence="11 12 13">
    <location>
        <position position="314"/>
    </location>
</feature>
<feature type="splice variant" id="VSP_010886" description="In isoform 2." evidence="9">
    <location>
        <begin position="253"/>
        <end position="259"/>
    </location>
</feature>
<feature type="sequence variant" id="VAR_057790" description="In dbSNP:rs17163640.">
    <original>R</original>
    <variation>W</variation>
    <location>
        <position position="662"/>
    </location>
</feature>
<feature type="mutagenesis site" description="No interaction with Rho." evidence="8">
    <original>W</original>
    <variation>A</variation>
    <location>
        <position position="493"/>
    </location>
</feature>
<feature type="sequence conflict" description="In Ref. 1; AAC80558." evidence="10" ref="1">
    <original>H</original>
    <variation>N</variation>
    <location>
        <position position="694"/>
    </location>
</feature>
<feature type="turn" evidence="14">
    <location>
        <begin position="4"/>
        <end position="6"/>
    </location>
</feature>
<feature type="turn" evidence="14">
    <location>
        <begin position="9"/>
        <end position="11"/>
    </location>
</feature>
<feature type="helix" evidence="14">
    <location>
        <begin position="12"/>
        <end position="19"/>
    </location>
</feature>
<feature type="helix" evidence="14">
    <location>
        <begin position="21"/>
        <end position="24"/>
    </location>
</feature>
<feature type="helix" evidence="14">
    <location>
        <begin position="28"/>
        <end position="31"/>
    </location>
</feature>
<feature type="helix" evidence="14">
    <location>
        <begin position="35"/>
        <end position="38"/>
    </location>
</feature>
<feature type="turn" evidence="14">
    <location>
        <begin position="43"/>
        <end position="45"/>
    </location>
</feature>
<feature type="helix" evidence="14">
    <location>
        <begin position="46"/>
        <end position="49"/>
    </location>
</feature>
<feature type="helix" evidence="14">
    <location>
        <begin position="54"/>
        <end position="71"/>
    </location>
</feature>
<feature type="turn" evidence="14">
    <location>
        <begin position="76"/>
        <end position="78"/>
    </location>
</feature>
<gene>
    <name type="primary">CNKSR1</name>
    <name type="synonym">CNK1</name>
</gene>